<proteinExistence type="inferred from homology"/>
<sequence>MNNFLKVSLLAAAVAVSLTACQKDEKTAANTAEVKAEASKPAEAPKAEAKSFEEQSGYAIGLSMGRYIANTLERQQELGIKLDNSVILKGVTDGLGKEAKMTDEEIQKVLQQYDAKINELTKAKADKDAVENQKKGEEYLAANAKKEGVKSTESGLQYQVEKMGTGAKPKATDIVKVHYTGTLTDGTKFDSSVDRGEPATFPLNQVIPGWTEGVQLMPVGSKFKFFLPSKLAYGEHGAGSIPANAVLVFDVELLAIEKPAADGDNAKK</sequence>
<gene>
    <name type="primary">fkpA</name>
</gene>
<feature type="signal peptide" evidence="3">
    <location>
        <begin position="1"/>
        <end position="20"/>
    </location>
</feature>
<feature type="chain" id="PRO_0000025539" description="FKBP-type peptidyl-prolyl cis-trans isomerase FkpA">
    <location>
        <begin position="21"/>
        <end position="268"/>
    </location>
</feature>
<feature type="domain" description="PPIase FKBP-type" evidence="2">
    <location>
        <begin position="172"/>
        <end position="257"/>
    </location>
</feature>
<evidence type="ECO:0000250" key="1"/>
<evidence type="ECO:0000255" key="2">
    <source>
        <dbReference type="PROSITE-ProRule" id="PRU00277"/>
    </source>
</evidence>
<evidence type="ECO:0000255" key="3">
    <source>
        <dbReference type="PROSITE-ProRule" id="PRU00303"/>
    </source>
</evidence>
<evidence type="ECO:0000305" key="4"/>
<name>FKBA_AERHY</name>
<comment type="function">
    <text>PPIases accelerate the folding of proteins. It catalyzes the cis-trans isomerization of proline imidic peptide bonds in oligopeptides. FkpA probably acts in the folding of extracytoplasmic proteins.</text>
</comment>
<comment type="catalytic activity">
    <reaction>
        <text>[protein]-peptidylproline (omega=180) = [protein]-peptidylproline (omega=0)</text>
        <dbReference type="Rhea" id="RHEA:16237"/>
        <dbReference type="Rhea" id="RHEA-COMP:10747"/>
        <dbReference type="Rhea" id="RHEA-COMP:10748"/>
        <dbReference type="ChEBI" id="CHEBI:83833"/>
        <dbReference type="ChEBI" id="CHEBI:83834"/>
        <dbReference type="EC" id="5.2.1.8"/>
    </reaction>
</comment>
<comment type="subcellular location">
    <subcellularLocation>
        <location evidence="1">Periplasm</location>
    </subcellularLocation>
</comment>
<comment type="similarity">
    <text evidence="4">Belongs to the FKBP-type PPIase family.</text>
</comment>
<protein>
    <recommendedName>
        <fullName>FKBP-type peptidyl-prolyl cis-trans isomerase FkpA</fullName>
        <shortName>PPIase</shortName>
        <ecNumber>5.2.1.8</ecNumber>
    </recommendedName>
    <alternativeName>
        <fullName>Rotamase</fullName>
    </alternativeName>
</protein>
<dbReference type="EC" id="5.2.1.8"/>
<dbReference type="EMBL" id="U56832">
    <property type="protein sequence ID" value="AAC45362.1"/>
    <property type="molecule type" value="Genomic_DNA"/>
</dbReference>
<dbReference type="RefSeq" id="WP_011704938.1">
    <property type="nucleotide sequence ID" value="NZ_WTZJ01000004.1"/>
</dbReference>
<dbReference type="SMR" id="O08437"/>
<dbReference type="GeneID" id="4487181"/>
<dbReference type="eggNOG" id="COG0545">
    <property type="taxonomic scope" value="Bacteria"/>
</dbReference>
<dbReference type="OMA" id="PAEFKLN"/>
<dbReference type="GO" id="GO:0042597">
    <property type="term" value="C:periplasmic space"/>
    <property type="evidence" value="ECO:0007669"/>
    <property type="project" value="UniProtKB-SubCell"/>
</dbReference>
<dbReference type="GO" id="GO:0003755">
    <property type="term" value="F:peptidyl-prolyl cis-trans isomerase activity"/>
    <property type="evidence" value="ECO:0007669"/>
    <property type="project" value="UniProtKB-KW"/>
</dbReference>
<dbReference type="GO" id="GO:0006457">
    <property type="term" value="P:protein folding"/>
    <property type="evidence" value="ECO:0007669"/>
    <property type="project" value="InterPro"/>
</dbReference>
<dbReference type="FunFam" id="3.10.50.40:FF:000045">
    <property type="entry name" value="Peptidyl-prolyl cis-trans isomerase"/>
    <property type="match status" value="1"/>
</dbReference>
<dbReference type="Gene3D" id="3.10.50.40">
    <property type="match status" value="1"/>
</dbReference>
<dbReference type="Gene3D" id="1.10.287.460">
    <property type="entry name" value="Peptidyl-prolyl cis-trans isomerase, FKBP-type, N-terminal domain"/>
    <property type="match status" value="1"/>
</dbReference>
<dbReference type="InterPro" id="IPR046357">
    <property type="entry name" value="PPIase_dom_sf"/>
</dbReference>
<dbReference type="InterPro" id="IPR001179">
    <property type="entry name" value="PPIase_FKBP_dom"/>
</dbReference>
<dbReference type="InterPro" id="IPR000774">
    <property type="entry name" value="PPIase_FKBP_N"/>
</dbReference>
<dbReference type="InterPro" id="IPR036944">
    <property type="entry name" value="PPIase_FKBP_N_sf"/>
</dbReference>
<dbReference type="NCBIfam" id="NF008150">
    <property type="entry name" value="PRK10902.1"/>
    <property type="match status" value="1"/>
</dbReference>
<dbReference type="PANTHER" id="PTHR43811:SF19">
    <property type="entry name" value="39 KDA FK506-BINDING NUCLEAR PROTEIN"/>
    <property type="match status" value="1"/>
</dbReference>
<dbReference type="PANTHER" id="PTHR43811">
    <property type="entry name" value="FKBP-TYPE PEPTIDYL-PROLYL CIS-TRANS ISOMERASE FKPA"/>
    <property type="match status" value="1"/>
</dbReference>
<dbReference type="Pfam" id="PF00254">
    <property type="entry name" value="FKBP_C"/>
    <property type="match status" value="1"/>
</dbReference>
<dbReference type="Pfam" id="PF01346">
    <property type="entry name" value="FKBP_N"/>
    <property type="match status" value="1"/>
</dbReference>
<dbReference type="SUPFAM" id="SSF54534">
    <property type="entry name" value="FKBP-like"/>
    <property type="match status" value="1"/>
</dbReference>
<dbReference type="PROSITE" id="PS50059">
    <property type="entry name" value="FKBP_PPIASE"/>
    <property type="match status" value="1"/>
</dbReference>
<dbReference type="PROSITE" id="PS51257">
    <property type="entry name" value="PROKAR_LIPOPROTEIN"/>
    <property type="match status" value="1"/>
</dbReference>
<reference key="1">
    <citation type="journal article" date="1997" name="J. Bacteriol.">
        <title>Cloning and characterization of two immunophilin-like genes, ilpA and fkpA, on a single 3.9-kilobase fragment of Aeromonas hydrophila genomic DNA.</title>
        <authorList>
            <person name="Wong C.Y.F."/>
            <person name="Heuzenroeder M.W."/>
            <person name="Quinn D.M."/>
            <person name="Flower R.L.P."/>
        </authorList>
    </citation>
    <scope>NUCLEOTIDE SEQUENCE [GENOMIC DNA]</scope>
    <source>
        <strain>A6</strain>
    </source>
</reference>
<keyword id="KW-0413">Isomerase</keyword>
<keyword id="KW-0574">Periplasm</keyword>
<keyword id="KW-0697">Rotamase</keyword>
<keyword id="KW-0732">Signal</keyword>
<organism>
    <name type="scientific">Aeromonas hydrophila</name>
    <dbReference type="NCBI Taxonomy" id="644"/>
    <lineage>
        <taxon>Bacteria</taxon>
        <taxon>Pseudomonadati</taxon>
        <taxon>Pseudomonadota</taxon>
        <taxon>Gammaproteobacteria</taxon>
        <taxon>Aeromonadales</taxon>
        <taxon>Aeromonadaceae</taxon>
        <taxon>Aeromonas</taxon>
    </lineage>
</organism>
<accession>O08437</accession>